<protein>
    <recommendedName>
        <fullName>Protamine-2</fullName>
    </recommendedName>
    <alternativeName>
        <fullName>Sperm histone P2</fullName>
    </alternativeName>
    <alternativeName>
        <fullName>Sperm protamine P2</fullName>
    </alternativeName>
</protein>
<name>PRM2_BOVIN</name>
<evidence type="ECO:0000250" key="1">
    <source>
        <dbReference type="UniProtKB" id="P07978"/>
    </source>
</evidence>
<evidence type="ECO:0000250" key="2">
    <source>
        <dbReference type="UniProtKB" id="P11248"/>
    </source>
</evidence>
<evidence type="ECO:0000256" key="3">
    <source>
        <dbReference type="SAM" id="MobiDB-lite"/>
    </source>
</evidence>
<evidence type="ECO:0000303" key="4">
    <source ref="3"/>
</evidence>
<evidence type="ECO:0000305" key="5"/>
<reference key="1">
    <citation type="journal article" date="1990" name="Nucleic Acids Res.">
        <title>The lack of protamine 2 (P2) in boar and bull spermatozoa is due to mutations within the P2 gene.</title>
        <authorList>
            <person name="Maier W.-M."/>
            <person name="Nussbaum G."/>
            <person name="Domenjoud L."/>
            <person name="Klemm U."/>
            <person name="Engel W."/>
        </authorList>
    </citation>
    <scope>NUCLEOTIDE SEQUENCE [MRNA] (ISOFORM 1)</scope>
    <source>
        <tissue>Testis</tissue>
    </source>
</reference>
<reference key="2">
    <citation type="journal article" date="1992" name="Biochim. Biophys. Acta">
        <title>The bovine protamine 2 gene: evidence for alternative splicing.</title>
        <authorList>
            <person name="Kremling H."/>
            <person name="Reinhart N."/>
            <person name="Schlosser M."/>
            <person name="Engel W."/>
        </authorList>
    </citation>
    <scope>NUCLEOTIDE SEQUENCE [GENOMIC DNA]</scope>
    <scope>ALTERNATIVE SPLICING</scope>
</reference>
<reference key="3">
    <citation type="submission" date="2005-11" db="EMBL/GenBank/DDBJ databases">
        <authorList>
            <consortium name="NIH - Mammalian Gene Collection (MGC) project"/>
        </authorList>
    </citation>
    <scope>NUCLEOTIDE SEQUENCE [LARGE SCALE MRNA] (ISOFORM 2)</scope>
    <source>
        <strain>Crossbred X Angus</strain>
        <tissue>Liver</tissue>
    </source>
</reference>
<accession>P19782</accession>
<accession>Q02097</accession>
<accession>Q28171</accession>
<accession>Q32L38</accession>
<sequence length="115" mass="13646">MVRCHVKSPTESPPGQQGSGQQGETEHPDQARELRPEDIPVYGRTHRGRYHYRHRSHTRRRPYRRRRRRACRHRRRRRGAAGPPCAPIPGTPQASRQGSGCRRMRRRRRRCGRQL</sequence>
<keyword id="KW-0025">Alternative splicing</keyword>
<keyword id="KW-0158">Chromosome</keyword>
<keyword id="KW-0217">Developmental protein</keyword>
<keyword id="KW-0221">Differentiation</keyword>
<keyword id="KW-0226">DNA condensation</keyword>
<keyword id="KW-0238">DNA-binding</keyword>
<keyword id="KW-0544">Nucleosome core</keyword>
<keyword id="KW-0539">Nucleus</keyword>
<keyword id="KW-0597">Phosphoprotein</keyword>
<keyword id="KW-1185">Reference proteome</keyword>
<keyword id="KW-0744">Spermatogenesis</keyword>
<feature type="chain" id="PRO_0000191594" description="Protamine-2">
    <location>
        <begin position="1"/>
        <end position="115"/>
    </location>
</feature>
<feature type="region of interest" description="Disordered" evidence="3">
    <location>
        <begin position="1"/>
        <end position="115"/>
    </location>
</feature>
<feature type="compositionally biased region" description="Basic and acidic residues" evidence="3">
    <location>
        <begin position="24"/>
        <end position="38"/>
    </location>
</feature>
<feature type="compositionally biased region" description="Basic residues" evidence="3">
    <location>
        <begin position="44"/>
        <end position="79"/>
    </location>
</feature>
<feature type="compositionally biased region" description="Basic residues" evidence="3">
    <location>
        <begin position="102"/>
        <end position="115"/>
    </location>
</feature>
<feature type="modified residue" description="Phosphoserine" evidence="2">
    <location>
        <position position="8"/>
    </location>
</feature>
<feature type="splice variant" id="VSP_021840" description="In isoform 2." evidence="4">
    <location>
        <begin position="79"/>
        <end position="99"/>
    </location>
</feature>
<feature type="sequence conflict" description="In Ref. 1; CAA34558." evidence="5" ref="1">
    <original>RRP</original>
    <variation>A</variation>
    <location>
        <begin position="60"/>
        <end position="62"/>
    </location>
</feature>
<feature type="sequence conflict" description="In Ref. 1." evidence="5" ref="1">
    <original>R</original>
    <variation>S</variation>
    <location>
        <position position="75"/>
    </location>
</feature>
<feature type="sequence conflict" description="In Ref. 1." evidence="5" ref="1">
    <location>
        <position position="78"/>
    </location>
</feature>
<feature type="sequence conflict" description="In Ref. 2; CAA42913/CAA42912." evidence="5" ref="2">
    <original>G</original>
    <variation>R</variation>
    <location>
        <position position="112"/>
    </location>
</feature>
<dbReference type="EMBL" id="X16559">
    <property type="protein sequence ID" value="CAA34558.1"/>
    <property type="molecule type" value="mRNA"/>
</dbReference>
<dbReference type="EMBL" id="X60353">
    <property type="protein sequence ID" value="CAA42913.1"/>
    <property type="molecule type" value="Genomic_DNA"/>
</dbReference>
<dbReference type="EMBL" id="X60353">
    <property type="protein sequence ID" value="CAA42912.1"/>
    <property type="status" value="ALT_INIT"/>
    <property type="molecule type" value="Genomic_DNA"/>
</dbReference>
<dbReference type="EMBL" id="BC109783">
    <property type="protein sequence ID" value="AAI09784.1"/>
    <property type="molecule type" value="mRNA"/>
</dbReference>
<dbReference type="PIR" id="S28937">
    <property type="entry name" value="S28937"/>
</dbReference>
<dbReference type="RefSeq" id="NP_776582.2">
    <molecule id="P19782-2"/>
    <property type="nucleotide sequence ID" value="NM_174157.4"/>
</dbReference>
<dbReference type="STRING" id="9913.ENSBTAP00000062174"/>
<dbReference type="PaxDb" id="9913-ENSBTAP00000037295"/>
<dbReference type="GeneID" id="281424"/>
<dbReference type="KEGG" id="bta:281424"/>
<dbReference type="CTD" id="5620"/>
<dbReference type="InParanoid" id="P19782"/>
<dbReference type="Proteomes" id="UP000009136">
    <property type="component" value="Unplaced"/>
</dbReference>
<dbReference type="GO" id="GO:0000786">
    <property type="term" value="C:nucleosome"/>
    <property type="evidence" value="ECO:0007669"/>
    <property type="project" value="UniProtKB-KW"/>
</dbReference>
<dbReference type="GO" id="GO:0005634">
    <property type="term" value="C:nucleus"/>
    <property type="evidence" value="ECO:0000318"/>
    <property type="project" value="GO_Central"/>
</dbReference>
<dbReference type="GO" id="GO:0003677">
    <property type="term" value="F:DNA binding"/>
    <property type="evidence" value="ECO:0007669"/>
    <property type="project" value="UniProtKB-KW"/>
</dbReference>
<dbReference type="GO" id="GO:0030261">
    <property type="term" value="P:chromosome condensation"/>
    <property type="evidence" value="ECO:0007669"/>
    <property type="project" value="UniProtKB-KW"/>
</dbReference>
<dbReference type="GO" id="GO:0006997">
    <property type="term" value="P:nucleus organization"/>
    <property type="evidence" value="ECO:0000318"/>
    <property type="project" value="GO_Central"/>
</dbReference>
<dbReference type="GO" id="GO:0007286">
    <property type="term" value="P:spermatid development"/>
    <property type="evidence" value="ECO:0000318"/>
    <property type="project" value="GO_Central"/>
</dbReference>
<dbReference type="GO" id="GO:0007283">
    <property type="term" value="P:spermatogenesis"/>
    <property type="evidence" value="ECO:0000250"/>
    <property type="project" value="UniProtKB"/>
</dbReference>
<dbReference type="InterPro" id="IPR000492">
    <property type="entry name" value="PRM2"/>
</dbReference>
<dbReference type="PANTHER" id="PTHR21341">
    <property type="entry name" value="PROTAMINE-2"/>
    <property type="match status" value="1"/>
</dbReference>
<dbReference type="PANTHER" id="PTHR21341:SF2">
    <property type="entry name" value="PROTAMINE-2"/>
    <property type="match status" value="1"/>
</dbReference>
<dbReference type="Pfam" id="PF00841">
    <property type="entry name" value="Protamine_P2"/>
    <property type="match status" value="1"/>
</dbReference>
<comment type="function">
    <text evidence="1">Protamines substitute for histones in the chromatin of sperm during the haploid phase of spermatogenesis. They compact sperm DNA into a highly condensed, stable and inactive complex.</text>
</comment>
<comment type="subunit">
    <text evidence="1">Interacts with TDRP.</text>
</comment>
<comment type="subcellular location">
    <subcellularLocation>
        <location evidence="1">Nucleus</location>
    </subcellularLocation>
    <subcellularLocation>
        <location evidence="1">Chromosome</location>
    </subcellularLocation>
</comment>
<comment type="alternative products">
    <event type="alternative splicing"/>
    <isoform>
        <id>P19782-1</id>
        <name>1</name>
        <sequence type="displayed"/>
    </isoform>
    <isoform>
        <id>P19782-2</id>
        <name>2</name>
        <sequence type="described" ref="VSP_021840"/>
    </isoform>
</comment>
<comment type="tissue specificity">
    <text>Testis.</text>
</comment>
<comment type="PTM">
    <text evidence="1">Proteolytic processing into mature chains is required for histone eviction during spermatogenesis. Transition proteins (TNP1 and TNP2) are required for processing.</text>
</comment>
<comment type="similarity">
    <text evidence="5">Belongs to the protamine P2 family.</text>
</comment>
<comment type="sequence caution" evidence="5">
    <conflict type="erroneous initiation">
        <sequence resource="EMBL-CDS" id="CAA42912"/>
    </conflict>
</comment>
<gene>
    <name type="primary">PRM2</name>
</gene>
<organism>
    <name type="scientific">Bos taurus</name>
    <name type="common">Bovine</name>
    <dbReference type="NCBI Taxonomy" id="9913"/>
    <lineage>
        <taxon>Eukaryota</taxon>
        <taxon>Metazoa</taxon>
        <taxon>Chordata</taxon>
        <taxon>Craniata</taxon>
        <taxon>Vertebrata</taxon>
        <taxon>Euteleostomi</taxon>
        <taxon>Mammalia</taxon>
        <taxon>Eutheria</taxon>
        <taxon>Laurasiatheria</taxon>
        <taxon>Artiodactyla</taxon>
        <taxon>Ruminantia</taxon>
        <taxon>Pecora</taxon>
        <taxon>Bovidae</taxon>
        <taxon>Bovinae</taxon>
        <taxon>Bos</taxon>
    </lineage>
</organism>
<proteinExistence type="evidence at transcript level"/>